<reference key="1">
    <citation type="submission" date="2004-01" db="EMBL/GenBank/DDBJ databases">
        <title>A superfamily of XK-related genes (XRG) widely expressed in vertebrates and invertebrates.</title>
        <authorList>
            <person name="Huang C.-H."/>
            <person name="Chen Y."/>
        </authorList>
    </citation>
    <scope>NUCLEOTIDE SEQUENCE [MRNA]</scope>
    <source>
        <strain>Sprague-Dawley</strain>
    </source>
</reference>
<reference key="2">
    <citation type="submission" date="2007-07" db="UniProtKB">
        <authorList>
            <person name="Lubec G."/>
            <person name="Kang S.U."/>
        </authorList>
    </citation>
    <scope>PROTEIN SEQUENCE OF 410-415</scope>
    <scope>IDENTIFICATION BY MASS SPECTROMETRY</scope>
    <source>
        <strain>Sprague-Dawley</strain>
        <tissue>Brain</tissue>
    </source>
</reference>
<reference key="3">
    <citation type="journal article" date="2012" name="Nat. Commun.">
        <title>Quantitative maps of protein phosphorylation sites across 14 different rat organs and tissues.</title>
        <authorList>
            <person name="Lundby A."/>
            <person name="Secher A."/>
            <person name="Lage K."/>
            <person name="Nordsborg N.B."/>
            <person name="Dmytriyev A."/>
            <person name="Lundby C."/>
            <person name="Olsen J.V."/>
        </authorList>
    </citation>
    <scope>PHOSPHORYLATION [LARGE SCALE ANALYSIS] AT SER-115</scope>
    <scope>IDENTIFICATION BY MASS SPECTROMETRY [LARGE SCALE ANALYSIS]</scope>
</reference>
<feature type="chain" id="PRO_0000190770" description="Endoplasmic reticulum membrane adapter protein XK">
    <location>
        <begin position="1"/>
        <end position="445"/>
    </location>
</feature>
<feature type="topological domain" description="Cytoplasmic" evidence="2">
    <location>
        <begin position="1"/>
        <end position="2"/>
    </location>
</feature>
<feature type="transmembrane region" description="Helical" evidence="2">
    <location>
        <begin position="3"/>
        <end position="23"/>
    </location>
</feature>
<feature type="topological domain" description="Extracellular" evidence="2">
    <location>
        <begin position="24"/>
        <end position="37"/>
    </location>
</feature>
<feature type="transmembrane region" description="Helical" evidence="2">
    <location>
        <begin position="38"/>
        <end position="58"/>
    </location>
</feature>
<feature type="topological domain" description="Cytoplasmic" evidence="2">
    <location>
        <begin position="59"/>
        <end position="68"/>
    </location>
</feature>
<feature type="transmembrane region" description="Helical" evidence="2">
    <location>
        <begin position="69"/>
        <end position="89"/>
    </location>
</feature>
<feature type="topological domain" description="Extracellular" evidence="2">
    <location>
        <begin position="90"/>
        <end position="140"/>
    </location>
</feature>
<feature type="transmembrane region" description="Helical" evidence="2">
    <location>
        <begin position="141"/>
        <end position="161"/>
    </location>
</feature>
<feature type="topological domain" description="Cytoplasmic" evidence="2">
    <location>
        <begin position="162"/>
        <end position="170"/>
    </location>
</feature>
<feature type="transmembrane region" description="Helical" evidence="2">
    <location>
        <begin position="171"/>
        <end position="191"/>
    </location>
</feature>
<feature type="topological domain" description="Extracellular" evidence="2">
    <location>
        <begin position="192"/>
        <end position="207"/>
    </location>
</feature>
<feature type="transmembrane region" description="Helical" evidence="2">
    <location>
        <begin position="208"/>
        <end position="228"/>
    </location>
</feature>
<feature type="topological domain" description="Cytoplasmic" evidence="2">
    <location>
        <begin position="229"/>
        <end position="234"/>
    </location>
</feature>
<feature type="transmembrane region" description="Helical" evidence="2">
    <location>
        <begin position="235"/>
        <end position="255"/>
    </location>
</feature>
<feature type="topological domain" description="Extracellular" evidence="2">
    <location>
        <begin position="256"/>
        <end position="276"/>
    </location>
</feature>
<feature type="transmembrane region" description="Helical" evidence="2">
    <location>
        <begin position="277"/>
        <end position="297"/>
    </location>
</feature>
<feature type="topological domain" description="Cytoplasmic" evidence="2">
    <location>
        <begin position="298"/>
        <end position="316"/>
    </location>
</feature>
<feature type="transmembrane region" description="Helical" evidence="2">
    <location>
        <begin position="317"/>
        <end position="337"/>
    </location>
</feature>
<feature type="topological domain" description="Extracellular" evidence="2">
    <location>
        <begin position="338"/>
        <end position="348"/>
    </location>
</feature>
<feature type="transmembrane region" description="Helical" evidence="2">
    <location>
        <begin position="349"/>
        <end position="369"/>
    </location>
</feature>
<feature type="topological domain" description="Cytoplasmic" evidence="2">
    <location>
        <begin position="370"/>
        <end position="445"/>
    </location>
</feature>
<feature type="modified residue" description="Phosphoserine" evidence="6">
    <location>
        <position position="115"/>
    </location>
</feature>
<feature type="disulfide bond" description="Interchain (with C-53 in Kell)" evidence="1">
    <location>
        <position position="346"/>
    </location>
</feature>
<evidence type="ECO:0000250" key="1">
    <source>
        <dbReference type="UniProtKB" id="P51811"/>
    </source>
</evidence>
<evidence type="ECO:0000255" key="2"/>
<evidence type="ECO:0000303" key="3">
    <source ref="1"/>
</evidence>
<evidence type="ECO:0000305" key="4"/>
<evidence type="ECO:0000312" key="5">
    <source>
        <dbReference type="RGD" id="1359650"/>
    </source>
</evidence>
<evidence type="ECO:0007744" key="6">
    <source>
    </source>
</evidence>
<dbReference type="EMBL" id="AY534256">
    <property type="protein sequence ID" value="AAT07105.1"/>
    <property type="molecule type" value="mRNA"/>
</dbReference>
<dbReference type="RefSeq" id="NP_001012227.1">
    <property type="nucleotide sequence ID" value="NM_001012227.1"/>
</dbReference>
<dbReference type="SMR" id="Q5GH61"/>
<dbReference type="FunCoup" id="Q5GH61">
    <property type="interactions" value="1348"/>
</dbReference>
<dbReference type="STRING" id="10116.ENSRNOP00000071189"/>
<dbReference type="iPTMnet" id="Q5GH61"/>
<dbReference type="PhosphoSitePlus" id="Q5GH61"/>
<dbReference type="PaxDb" id="10116-ENSRNOP00000039017"/>
<dbReference type="GeneID" id="497078"/>
<dbReference type="KEGG" id="rno:497078"/>
<dbReference type="UCSC" id="RGD:1359650">
    <property type="organism name" value="rat"/>
</dbReference>
<dbReference type="AGR" id="RGD:1359650"/>
<dbReference type="CTD" id="7504"/>
<dbReference type="RGD" id="1359650">
    <property type="gene designation" value="Xk"/>
</dbReference>
<dbReference type="eggNOG" id="ENOG502QTTF">
    <property type="taxonomic scope" value="Eukaryota"/>
</dbReference>
<dbReference type="InParanoid" id="Q5GH61"/>
<dbReference type="OrthoDB" id="10037417at2759"/>
<dbReference type="PhylomeDB" id="Q5GH61"/>
<dbReference type="Reactome" id="R-RNO-375276">
    <property type="pathway name" value="Peptide ligand-binding receptors"/>
</dbReference>
<dbReference type="PRO" id="PR:Q5GH61"/>
<dbReference type="Proteomes" id="UP000002494">
    <property type="component" value="Unplaced"/>
</dbReference>
<dbReference type="GO" id="GO:0005789">
    <property type="term" value="C:endoplasmic reticulum membrane"/>
    <property type="evidence" value="ECO:0000250"/>
    <property type="project" value="UniProtKB"/>
</dbReference>
<dbReference type="GO" id="GO:0005886">
    <property type="term" value="C:plasma membrane"/>
    <property type="evidence" value="ECO:0000250"/>
    <property type="project" value="UniProtKB"/>
</dbReference>
<dbReference type="GO" id="GO:0030674">
    <property type="term" value="F:protein-macromolecule adaptor activity"/>
    <property type="evidence" value="ECO:0000250"/>
    <property type="project" value="UniProtKB"/>
</dbReference>
<dbReference type="GO" id="GO:0006865">
    <property type="term" value="P:amino acid transport"/>
    <property type="evidence" value="ECO:0007669"/>
    <property type="project" value="UniProtKB-KW"/>
</dbReference>
<dbReference type="GO" id="GO:0006874">
    <property type="term" value="P:intracellular calcium ion homeostasis"/>
    <property type="evidence" value="ECO:0000266"/>
    <property type="project" value="RGD"/>
</dbReference>
<dbReference type="GO" id="GO:0010961">
    <property type="term" value="P:intracellular magnesium ion homeostasis"/>
    <property type="evidence" value="ECO:0000266"/>
    <property type="project" value="RGD"/>
</dbReference>
<dbReference type="GO" id="GO:0042552">
    <property type="term" value="P:myelination"/>
    <property type="evidence" value="ECO:0000266"/>
    <property type="project" value="RGD"/>
</dbReference>
<dbReference type="GO" id="GO:0031133">
    <property type="term" value="P:regulation of axon diameter"/>
    <property type="evidence" value="ECO:0000266"/>
    <property type="project" value="RGD"/>
</dbReference>
<dbReference type="GO" id="GO:0008361">
    <property type="term" value="P:regulation of cell size"/>
    <property type="evidence" value="ECO:0000266"/>
    <property type="project" value="RGD"/>
</dbReference>
<dbReference type="GO" id="GO:0048741">
    <property type="term" value="P:skeletal muscle fiber development"/>
    <property type="evidence" value="ECO:0000266"/>
    <property type="project" value="RGD"/>
</dbReference>
<dbReference type="InterPro" id="IPR018629">
    <property type="entry name" value="XK-rel"/>
</dbReference>
<dbReference type="InterPro" id="IPR051773">
    <property type="entry name" value="XK-related_adapter"/>
</dbReference>
<dbReference type="PANTHER" id="PTHR14297:SF8">
    <property type="entry name" value="ENDOPLASMIC RETICULUM MEMBRANE ADAPTER PROTEIN XK"/>
    <property type="match status" value="1"/>
</dbReference>
<dbReference type="PANTHER" id="PTHR14297">
    <property type="entry name" value="MEMBRANE TRANSPORT PROTEIN XK FAMILY MEMBER"/>
    <property type="match status" value="1"/>
</dbReference>
<dbReference type="Pfam" id="PF09815">
    <property type="entry name" value="XK-related"/>
    <property type="match status" value="1"/>
</dbReference>
<keyword id="KW-0029">Amino-acid transport</keyword>
<keyword id="KW-0903">Direct protein sequencing</keyword>
<keyword id="KW-1015">Disulfide bond</keyword>
<keyword id="KW-0256">Endoplasmic reticulum</keyword>
<keyword id="KW-0472">Membrane</keyword>
<keyword id="KW-0597">Phosphoprotein</keyword>
<keyword id="KW-1185">Reference proteome</keyword>
<keyword id="KW-0812">Transmembrane</keyword>
<keyword id="KW-1133">Transmembrane helix</keyword>
<keyword id="KW-0813">Transport</keyword>
<gene>
    <name evidence="5" type="primary">Xk</name>
    <name type="synonym">Xkh</name>
    <name type="synonym">Xkr1</name>
    <name evidence="3" type="synonym">Xrg1</name>
</gene>
<comment type="function">
    <text evidence="1">Recruits the lipid transfer protein VPS13A from lipid droplets to the endoplasmic reticulum (ER) membrane.</text>
</comment>
<comment type="subunit">
    <text evidence="1">Heterodimer with Kell; disulfide-linked. Interacts with VPS13A.</text>
</comment>
<comment type="subcellular location">
    <subcellularLocation>
        <location evidence="1">Endoplasmic reticulum membrane</location>
        <topology evidence="1">Multi-pass membrane protein</topology>
    </subcellularLocation>
</comment>
<comment type="similarity">
    <text evidence="4">Belongs to the XK family.</text>
</comment>
<accession>Q5GH61</accession>
<organism>
    <name type="scientific">Rattus norvegicus</name>
    <name type="common">Rat</name>
    <dbReference type="NCBI Taxonomy" id="10116"/>
    <lineage>
        <taxon>Eukaryota</taxon>
        <taxon>Metazoa</taxon>
        <taxon>Chordata</taxon>
        <taxon>Craniata</taxon>
        <taxon>Vertebrata</taxon>
        <taxon>Euteleostomi</taxon>
        <taxon>Mammalia</taxon>
        <taxon>Eutheria</taxon>
        <taxon>Euarchontoglires</taxon>
        <taxon>Glires</taxon>
        <taxon>Rodentia</taxon>
        <taxon>Myomorpha</taxon>
        <taxon>Muroidea</taxon>
        <taxon>Muridae</taxon>
        <taxon>Murinae</taxon>
        <taxon>Rattus</taxon>
    </lineage>
</organism>
<protein>
    <recommendedName>
        <fullName evidence="4">Endoplasmic reticulum membrane adapter protein XK</fullName>
    </recommendedName>
    <alternativeName>
        <fullName>Membrane transport protein XK</fullName>
    </alternativeName>
    <alternativeName>
        <fullName>XK homolog</fullName>
    </alternativeName>
    <alternativeName>
        <fullName>XK-related protein 1</fullName>
    </alternativeName>
</protein>
<name>XK_RAT</name>
<proteinExistence type="evidence at protein level"/>
<sequence>MKFPASVLASVFLFVAETMAALYLSSTYRSAGDRMWQALTLFFSLMPCTLVQLTLLFVHRDLSRDRPLVLLMHLLQLGPLYRCCEVFCIYCQSDQNEEPYVSITKKRQMPKDGLSEEVEKEVGQSEGKLFTHRSAFSRASVIQAFLGSAPQLTLQLYITVLEQNITTGRFIMVLSLLSIVYGALRCNILAIKIKYDEYEVKVKPLAYVCIFLWRSFEIATRVIVLVLFTSVLKIWVVVVILVNFFSFFLYPWILFWNSGSPFPENIEKALTRVGTTIVLGFLTLLYAGINMFCWSAVQLKIDNPELISKSQNWYRLLIYYMMRFVENSVLLLLWFFFKTDIYMYVCAPLLILQLLIGYCTSILFMLVFYQFFHPCKKLFSSSVSESFSACLRCVCWSSARRKSTEPVGRIDTDLKACTDQGAQPSTSKLTPEATEIWTAVDLCST</sequence>